<gene>
    <name evidence="1" type="primary">cpgS</name>
    <name type="ordered locus">TSIB_0160</name>
</gene>
<comment type="function">
    <text evidence="1">Catalyzes the formation of cyclic 2,3-diphosphoglycerate (cDPG) by formation of an intramolecular phosphoanhydride bond at the expense of ATP.</text>
</comment>
<comment type="catalytic activity">
    <reaction evidence="1">
        <text>(2R)-2,3-bisphosphoglycerate + ATP + H(+) = cyclic (2R)-2,3-bisphosphoglycerate + ADP + phosphate</text>
        <dbReference type="Rhea" id="RHEA:42412"/>
        <dbReference type="ChEBI" id="CHEBI:15378"/>
        <dbReference type="ChEBI" id="CHEBI:30616"/>
        <dbReference type="ChEBI" id="CHEBI:43474"/>
        <dbReference type="ChEBI" id="CHEBI:58248"/>
        <dbReference type="ChEBI" id="CHEBI:79081"/>
        <dbReference type="ChEBI" id="CHEBI:456216"/>
        <dbReference type="EC" id="6.5.1.9"/>
    </reaction>
</comment>
<comment type="subcellular location">
    <subcellularLocation>
        <location evidence="1">Cytoplasm</location>
    </subcellularLocation>
</comment>
<comment type="similarity">
    <text evidence="1">Belongs to the cyclic 2,3-diphosphoglycerate synthetase family.</text>
</comment>
<accession>C6A0T3</accession>
<dbReference type="EC" id="6.5.1.9" evidence="1"/>
<dbReference type="EMBL" id="CP001463">
    <property type="protein sequence ID" value="ACS89228.1"/>
    <property type="molecule type" value="Genomic_DNA"/>
</dbReference>
<dbReference type="RefSeq" id="WP_012766189.1">
    <property type="nucleotide sequence ID" value="NC_012883.1"/>
</dbReference>
<dbReference type="SMR" id="C6A0T3"/>
<dbReference type="STRING" id="604354.TSIB_0160"/>
<dbReference type="GeneID" id="8095132"/>
<dbReference type="KEGG" id="tsi:TSIB_0160"/>
<dbReference type="eggNOG" id="arCOG01230">
    <property type="taxonomic scope" value="Archaea"/>
</dbReference>
<dbReference type="HOGENOM" id="CLU_638764_0_0_2"/>
<dbReference type="OrthoDB" id="85545at2157"/>
<dbReference type="Proteomes" id="UP000009079">
    <property type="component" value="Chromosome"/>
</dbReference>
<dbReference type="GO" id="GO:0005737">
    <property type="term" value="C:cytoplasm"/>
    <property type="evidence" value="ECO:0007669"/>
    <property type="project" value="UniProtKB-SubCell"/>
</dbReference>
<dbReference type="GO" id="GO:0005524">
    <property type="term" value="F:ATP binding"/>
    <property type="evidence" value="ECO:0007669"/>
    <property type="project" value="UniProtKB-KW"/>
</dbReference>
<dbReference type="GO" id="GO:0036356">
    <property type="term" value="F:cyclic 2,3-diphosphoglycerate synthetase activity"/>
    <property type="evidence" value="ECO:0007669"/>
    <property type="project" value="InterPro"/>
</dbReference>
<dbReference type="GO" id="GO:0016874">
    <property type="term" value="F:ligase activity"/>
    <property type="evidence" value="ECO:0007669"/>
    <property type="project" value="UniProtKB-UniRule"/>
</dbReference>
<dbReference type="GO" id="GO:0006094">
    <property type="term" value="P:gluconeogenesis"/>
    <property type="evidence" value="ECO:0007669"/>
    <property type="project" value="InterPro"/>
</dbReference>
<dbReference type="Gene3D" id="3.40.50.300">
    <property type="entry name" value="P-loop containing nucleotide triphosphate hydrolases"/>
    <property type="match status" value="1"/>
</dbReference>
<dbReference type="HAMAP" id="MF_01908">
    <property type="entry name" value="Cyc_PG_syn"/>
    <property type="match status" value="1"/>
</dbReference>
<dbReference type="InterPro" id="IPR053199">
    <property type="entry name" value="cDPG_synthetase-like"/>
</dbReference>
<dbReference type="InterPro" id="IPR016557">
    <property type="entry name" value="Cyc_diphosphoglycerate_synth"/>
</dbReference>
<dbReference type="InterPro" id="IPR027417">
    <property type="entry name" value="P-loop_NTPase"/>
</dbReference>
<dbReference type="PANTHER" id="PTHR42869">
    <property type="entry name" value="SLL0572 PROTEIN"/>
    <property type="match status" value="1"/>
</dbReference>
<dbReference type="PANTHER" id="PTHR42869:SF1">
    <property type="entry name" value="SLL0572 PROTEIN"/>
    <property type="match status" value="1"/>
</dbReference>
<dbReference type="PIRSF" id="PIRSF009445">
    <property type="entry name" value="Cyc_PG_syn"/>
    <property type="match status" value="1"/>
</dbReference>
<dbReference type="SUPFAM" id="SSF52540">
    <property type="entry name" value="P-loop containing nucleoside triphosphate hydrolases"/>
    <property type="match status" value="1"/>
</dbReference>
<organism>
    <name type="scientific">Thermococcus sibiricus (strain DSM 12597 / MM 739)</name>
    <dbReference type="NCBI Taxonomy" id="604354"/>
    <lineage>
        <taxon>Archaea</taxon>
        <taxon>Methanobacteriati</taxon>
        <taxon>Methanobacteriota</taxon>
        <taxon>Thermococci</taxon>
        <taxon>Thermococcales</taxon>
        <taxon>Thermococcaceae</taxon>
        <taxon>Thermococcus</taxon>
    </lineage>
</organism>
<name>CPGS_THESM</name>
<keyword id="KW-0067">ATP-binding</keyword>
<keyword id="KW-0963">Cytoplasm</keyword>
<keyword id="KW-0436">Ligase</keyword>
<keyword id="KW-0547">Nucleotide-binding</keyword>
<keyword id="KW-1185">Reference proteome</keyword>
<sequence>MRMVLIDGEHYPDVTAWAIKKIGDVSCAVFLGGTEKIGDMKSLEEKIGVKLYYGESYISNIKKAINENKIGEVIDLSDEPVLNYEDRFRIAAVLLKHGIKYKGADFEFSPKEMVQINKPSLTILGTGKRVGKTAISGFVARTLKEISKPIIVTMGRGGPEEPEIIEGNKLEITPDFLVRVAESGKHAASDHFEDALTSRVITIGCRRCGGGMVGFSFFDIVNKGIKLAEKLEGDIVILEGSGATFPAVKADKYITVVGATQRIEFIKSYFGPFRIGLADLIVITLADMVSKEKIEKIQKIIESINPDAEIHLTAFKPRPLSEIKGKKAILVMTAPPEGLEKAARHLENRYDVEIVGKSANLANRPKLIEDLSRFKYYDTVLVELKAAAVDVATKEALKYGKEVIYIDNEPVNIDNKNLREAVLEIGWELKGERK</sequence>
<feature type="chain" id="PRO_1000216179" description="Cyclic 2,3-diphosphoglycerate synthetase">
    <location>
        <begin position="1"/>
        <end position="434"/>
    </location>
</feature>
<proteinExistence type="inferred from homology"/>
<reference key="1">
    <citation type="journal article" date="2009" name="Appl. Environ. Microbiol.">
        <title>Metabolic versatility and indigenous origin of the archaeon Thermococcus sibiricus, isolated from a siberian oil reservoir, as revealed by genome analysis.</title>
        <authorList>
            <person name="Mardanov A.V."/>
            <person name="Ravin N.V."/>
            <person name="Svetlitchnyi V.A."/>
            <person name="Beletsky A.V."/>
            <person name="Miroshnichenko M.L."/>
            <person name="Bonch-Osmolovskaya E.A."/>
            <person name="Skryabin K.G."/>
        </authorList>
    </citation>
    <scope>NUCLEOTIDE SEQUENCE [LARGE SCALE GENOMIC DNA]</scope>
    <source>
        <strain>DSM 12597 / MM 739</strain>
    </source>
</reference>
<protein>
    <recommendedName>
        <fullName evidence="1">Cyclic 2,3-diphosphoglycerate synthetase</fullName>
        <shortName evidence="1">cDPGS</shortName>
        <ecNumber evidence="1">6.5.1.9</ecNumber>
    </recommendedName>
</protein>
<evidence type="ECO:0000255" key="1">
    <source>
        <dbReference type="HAMAP-Rule" id="MF_01908"/>
    </source>
</evidence>